<accession>P04095</accession>
<accession>B7ZNU8</accession>
<accession>Q498A4</accession>
<accession>Q61899</accession>
<reference key="1">
    <citation type="journal article" date="1984" name="Proc. Natl. Acad. Sci. U.S.A.">
        <title>Nucleotide sequence of a growth-related mRNA encoding a member of the prolactin-growth hormone family.</title>
        <authorList>
            <person name="Linzer D.I.H."/>
            <person name="Nathans D."/>
        </authorList>
    </citation>
    <scope>NUCLEOTIDE SEQUENCE [MRNA] (ISOFORM 1)</scope>
    <source>
        <strain>BALB/cJ</strain>
    </source>
</reference>
<reference key="2">
    <citation type="journal article" date="1994" name="FEBS Lett.">
        <title>Expression of different mitogen-regulated protein/proliferin mRNAs in Ehrlich carcinoma cells.</title>
        <authorList>
            <person name="Gil-Torregrosa B."/>
            <person name="Urdiales J.L."/>
            <person name="Lozano J."/>
            <person name="Mates J.M."/>
            <person name="Sanchez-Jimenez F."/>
        </authorList>
    </citation>
    <scope>NUCLEOTIDE SEQUENCE [MRNA] (ISOFORM 1)</scope>
    <source>
        <tissue>Ehrlich ascites tumor cell</tissue>
    </source>
</reference>
<reference key="3">
    <citation type="journal article" date="2006" name="Neurosci. Res.">
        <title>Proliferin enhances microvilli formation and cell growth of neuroblastoma cells.</title>
        <authorList>
            <person name="Wang J.W."/>
            <person name="Jiang Y.N."/>
            <person name="Huang C.Y."/>
            <person name="Huang P.Y."/>
            <person name="Huang M.C."/>
            <person name="Cheng W.T."/>
            <person name="Shen C.K."/>
            <person name="Ju Y.T."/>
        </authorList>
    </citation>
    <scope>NUCLEOTIDE SEQUENCE [MRNA] (ISOFORMS 1 AND 2)</scope>
    <scope>FUNCTION</scope>
    <scope>SUBCELLULAR LOCATION</scope>
    <scope>TISSUE SPECIFICITY</scope>
    <scope>DEVELOPMENTAL STAGE</scope>
    <source>
        <strain>C57BL/6J</strain>
        <tissue>Brain</tissue>
    </source>
</reference>
<reference key="4">
    <citation type="journal article" date="2009" name="PLoS Biol.">
        <title>Lineage-specific biology revealed by a finished genome assembly of the mouse.</title>
        <authorList>
            <person name="Church D.M."/>
            <person name="Goodstadt L."/>
            <person name="Hillier L.W."/>
            <person name="Zody M.C."/>
            <person name="Goldstein S."/>
            <person name="She X."/>
            <person name="Bult C.J."/>
            <person name="Agarwala R."/>
            <person name="Cherry J.L."/>
            <person name="DiCuccio M."/>
            <person name="Hlavina W."/>
            <person name="Kapustin Y."/>
            <person name="Meric P."/>
            <person name="Maglott D."/>
            <person name="Birtle Z."/>
            <person name="Marques A.C."/>
            <person name="Graves T."/>
            <person name="Zhou S."/>
            <person name="Teague B."/>
            <person name="Potamousis K."/>
            <person name="Churas C."/>
            <person name="Place M."/>
            <person name="Herschleb J."/>
            <person name="Runnheim R."/>
            <person name="Forrest D."/>
            <person name="Amos-Landgraf J."/>
            <person name="Schwartz D.C."/>
            <person name="Cheng Z."/>
            <person name="Lindblad-Toh K."/>
            <person name="Eichler E.E."/>
            <person name="Ponting C.P."/>
        </authorList>
    </citation>
    <scope>NUCLEOTIDE SEQUENCE [LARGE SCALE GENOMIC DNA]</scope>
    <source>
        <strain>C57BL/6J</strain>
    </source>
</reference>
<reference key="5">
    <citation type="journal article" date="2004" name="Genome Res.">
        <title>The status, quality, and expansion of the NIH full-length cDNA project: the Mammalian Gene Collection (MGC).</title>
        <authorList>
            <consortium name="The MGC Project Team"/>
        </authorList>
    </citation>
    <scope>NUCLEOTIDE SEQUENCE [LARGE SCALE MRNA] (ISOFORM 1)</scope>
    <source>
        <strain>C57BL/6J</strain>
        <tissue>Embryo</tissue>
        <tissue>Placenta</tissue>
    </source>
</reference>
<reference key="6">
    <citation type="journal article" date="1987" name="EMBO J.">
        <title>Transcriptional regulation of proliferin gene expression in response to serum in transfected mouse cells.</title>
        <authorList>
            <person name="Linzer D.I.H."/>
            <person name="Mordacq J.C."/>
        </authorList>
    </citation>
    <scope>NUCLEOTIDE SEQUENCE [GENOMIC DNA] OF 1-10</scope>
    <source>
        <strain>BALB/cJ</strain>
    </source>
</reference>
<reference key="7">
    <citation type="journal article" date="1999" name="Endocrinology">
        <title>Signaling between the placenta and the uterus involving the mitogen-regulated protein/proliferins.</title>
        <authorList>
            <person name="Fang Y."/>
            <person name="Lepont P."/>
            <person name="Fassett J.T."/>
            <person name="Ford S.P."/>
            <person name="Mubaidin A."/>
            <person name="Hamilton R.T."/>
            <person name="Nilsen-Hamilton M."/>
        </authorList>
    </citation>
    <scope>SUBCELLULAR LOCATION</scope>
    <scope>TISSUE SPECIFICITY</scope>
    <scope>DEVELOPMENTAL STAGE</scope>
    <scope>GLYCOSYLATION</scope>
</reference>
<reference key="8">
    <citation type="journal article" date="2001" name="Endocrinology">
        <title>Mrp3, a mitogen-regulated protein/proliferin gene expressed in wound healing and in hair follicles.</title>
        <authorList>
            <person name="Fassett J.T."/>
            <person name="Nilsen-Hamilton M."/>
        </authorList>
    </citation>
    <scope>FUNCTION</scope>
    <scope>TISSUE SPECIFICITY</scope>
    <scope>DEVELOPMENTAL STAGE</scope>
</reference>
<evidence type="ECO:0000250" key="1"/>
<evidence type="ECO:0000255" key="2"/>
<evidence type="ECO:0000269" key="3">
    <source>
    </source>
</evidence>
<evidence type="ECO:0000269" key="4">
    <source>
    </source>
</evidence>
<evidence type="ECO:0000269" key="5">
    <source>
    </source>
</evidence>
<evidence type="ECO:0000303" key="6">
    <source>
    </source>
</evidence>
<evidence type="ECO:0000305" key="7"/>
<sequence>MLPSLIQPCSWILLLLLVNSSLLWKNVASFPMCAMRNGRCFMSFEDTFELAGSLSHNISIEVSELFTEFEKHYSNVSGLRDKSPMRCNTSFLPTPENKEQARLTHYSALLKSGAMILDAWESPLDDLVSELSTIKNVPDIIISKATDIKKKINAVRNGVNALMSTMLQNGDEEKKNPAWFLQSDNEDARIHSLYGMISCLDNDFKKVDIYLNVLKCYMLKIDNC</sequence>
<proteinExistence type="evidence at protein level"/>
<keyword id="KW-0025">Alternative splicing</keyword>
<keyword id="KW-1015">Disulfide bond</keyword>
<keyword id="KW-0256">Endoplasmic reticulum</keyword>
<keyword id="KW-0325">Glycoprotein</keyword>
<keyword id="KW-0372">Hormone</keyword>
<keyword id="KW-1185">Reference proteome</keyword>
<keyword id="KW-0964">Secreted</keyword>
<keyword id="KW-0732">Signal</keyword>
<comment type="function">
    <text evidence="4 5">May have a role in embryonic development. It is likely to provide a growth stimulus to target cells in maternal and fetal tissues during the development of the embryo at mid-gestation. May play a role during wound healing and in the hair follicle cycle as a growth factor and/or an angiogenesis factor. May play a role in microvilli formation and cell proliferation of neuroblastoma cells.</text>
</comment>
<comment type="subcellular location">
    <subcellularLocation>
        <location evidence="3 5">Secreted</location>
    </subcellularLocation>
    <subcellularLocation>
        <location evidence="5">Endoplasmic reticulum</location>
    </subcellularLocation>
</comment>
<comment type="alternative products">
    <event type="alternative splicing"/>
    <isoform>
        <id>P04095-1</id>
        <name>1</name>
        <sequence type="displayed"/>
    </isoform>
    <isoform>
        <id>P04095-2</id>
        <name>2</name>
        <sequence type="described" ref="VSP_043544"/>
    </isoform>
</comment>
<comment type="tissue specificity">
    <text evidence="3 4 5">Expressed in brain and cerebellum (PubMed:16876275). Expressed in placenta and hair follicles, with highest expression levels detected in the outer root sheath and no expression detected in bulb (PubMed:10537154, PubMed:11316781). Also expressed in body fluids such as plasma and amniotic fluid (PubMed:10537154). Expressed in embryonic fibroblasts and at low levels in keratinocytes (PubMed:11316781). Isoform 1: Expressed in brain and Neuro-2a cells (PubMed:16876275). Isoform 2: Expressed in brain (PubMed:16876275).</text>
</comment>
<comment type="developmental stage">
    <text evidence="3 4 5">Expressed at low levels during hair follicle morphogenesis, with highest expression levels detected at late anagen stage of the hair follicle cycle (PubMed:11316781). Expressed in developing brain from embryo to adult (PubMed:16876275). In placenta, detected at 8 dpc, peaks at 10 dpc and declines thereafter (PubMed:10537154).</text>
</comment>
<comment type="PTM">
    <text evidence="3">N-glycosylated and sialylated.</text>
</comment>
<comment type="similarity">
    <text evidence="7">Belongs to the somatotropin/prolactin family.</text>
</comment>
<feature type="signal peptide" evidence="2">
    <location>
        <begin position="1"/>
        <end position="29"/>
    </location>
</feature>
<feature type="chain" id="PRO_0000032967" description="Prolactin-2C2">
    <location>
        <begin position="30"/>
        <end position="224"/>
    </location>
</feature>
<feature type="glycosylation site" description="N-linked (GlcNAc...) asparagine" evidence="2">
    <location>
        <position position="19"/>
    </location>
</feature>
<feature type="glycosylation site" description="N-linked (GlcNAc...) asparagine" evidence="2">
    <location>
        <position position="57"/>
    </location>
</feature>
<feature type="glycosylation site" description="N-linked (GlcNAc...) asparagine" evidence="2">
    <location>
        <position position="75"/>
    </location>
</feature>
<feature type="glycosylation site" description="N-linked (GlcNAc...) asparagine" evidence="2">
    <location>
        <position position="88"/>
    </location>
</feature>
<feature type="disulfide bond" evidence="1">
    <location>
        <begin position="33"/>
        <end position="40"/>
    </location>
</feature>
<feature type="disulfide bond" evidence="1">
    <location>
        <begin position="87"/>
        <end position="199"/>
    </location>
</feature>
<feature type="disulfide bond" evidence="1">
    <location>
        <begin position="216"/>
        <end position="224"/>
    </location>
</feature>
<feature type="splice variant" id="VSP_043544" description="In isoform 2." evidence="6">
    <location>
        <begin position="70"/>
        <end position="105"/>
    </location>
</feature>
<gene>
    <name type="primary">Prl2c2</name>
    <name type="synonym">Mrp1</name>
    <name type="synonym">Plf</name>
    <name type="synonym">Plf1</name>
</gene>
<protein>
    <recommendedName>
        <fullName>Prolactin-2C2</fullName>
    </recommendedName>
    <alternativeName>
        <fullName>Mitogen-regulated protein 1</fullName>
    </alternativeName>
    <alternativeName>
        <fullName>Proliferin-1</fullName>
    </alternativeName>
</protein>
<organism>
    <name type="scientific">Mus musculus</name>
    <name type="common">Mouse</name>
    <dbReference type="NCBI Taxonomy" id="10090"/>
    <lineage>
        <taxon>Eukaryota</taxon>
        <taxon>Metazoa</taxon>
        <taxon>Chordata</taxon>
        <taxon>Craniata</taxon>
        <taxon>Vertebrata</taxon>
        <taxon>Euteleostomi</taxon>
        <taxon>Mammalia</taxon>
        <taxon>Eutheria</taxon>
        <taxon>Euarchontoglires</taxon>
        <taxon>Glires</taxon>
        <taxon>Rodentia</taxon>
        <taxon>Myomorpha</taxon>
        <taxon>Muroidea</taxon>
        <taxon>Muridae</taxon>
        <taxon>Murinae</taxon>
        <taxon>Mus</taxon>
        <taxon>Mus</taxon>
    </lineage>
</organism>
<name>PR2C2_MOUSE</name>
<dbReference type="EMBL" id="K02245">
    <property type="protein sequence ID" value="AAA39946.1"/>
    <property type="molecule type" value="mRNA"/>
</dbReference>
<dbReference type="EMBL" id="X75557">
    <property type="protein sequence ID" value="CAA53234.1"/>
    <property type="molecule type" value="mRNA"/>
</dbReference>
<dbReference type="EMBL" id="CT033774">
    <property type="status" value="NOT_ANNOTATED_CDS"/>
    <property type="molecule type" value="Genomic_DNA"/>
</dbReference>
<dbReference type="EMBL" id="BC080826">
    <property type="protein sequence ID" value="AAH80826.1"/>
    <property type="molecule type" value="mRNA"/>
</dbReference>
<dbReference type="EMBL" id="BC100300">
    <property type="protein sequence ID" value="AAI00301.1"/>
    <property type="molecule type" value="mRNA"/>
</dbReference>
<dbReference type="EMBL" id="BC145439">
    <property type="protein sequence ID" value="AAI45440.1"/>
    <property type="molecule type" value="mRNA"/>
</dbReference>
<dbReference type="EMBL" id="X05786">
    <property type="protein sequence ID" value="CAA29230.1"/>
    <property type="molecule type" value="Genomic_DNA"/>
</dbReference>
<dbReference type="EMBL" id="X05787">
    <property type="protein sequence ID" value="CAA29231.1"/>
    <property type="molecule type" value="Genomic_DNA"/>
</dbReference>
<dbReference type="CCDS" id="CCDS36596.1">
    <molecule id="P04095-1"/>
</dbReference>
<dbReference type="PIR" id="A05086">
    <property type="entry name" value="A05086"/>
</dbReference>
<dbReference type="RefSeq" id="NP_112468.1">
    <molecule id="P04095-1"/>
    <property type="nucleotide sequence ID" value="NM_031191.2"/>
</dbReference>
<dbReference type="SMR" id="P04095"/>
<dbReference type="BioGRID" id="202244">
    <property type="interactions" value="3"/>
</dbReference>
<dbReference type="FunCoup" id="P04095">
    <property type="interactions" value="3"/>
</dbReference>
<dbReference type="STRING" id="10090.ENSMUSP00000106224"/>
<dbReference type="GlyCosmos" id="P04095">
    <property type="glycosylation" value="4 sites, No reported glycans"/>
</dbReference>
<dbReference type="GlyGen" id="P04095">
    <property type="glycosylation" value="4 sites"/>
</dbReference>
<dbReference type="PaxDb" id="10090-ENSMUSP00000106224"/>
<dbReference type="PeptideAtlas" id="P04095"/>
<dbReference type="ProteomicsDB" id="289822">
    <molecule id="P04095-1"/>
</dbReference>
<dbReference type="Pumba" id="P04095"/>
<dbReference type="DNASU" id="18811"/>
<dbReference type="Ensembl" id="ENSMUST00000110594.4">
    <molecule id="P04095-1"/>
    <property type="protein sequence ID" value="ENSMUSP00000106224.3"/>
    <property type="gene ID" value="ENSMUSG00000079092.5"/>
</dbReference>
<dbReference type="Ensembl" id="ENSMUST00000221612.2">
    <molecule id="P04095-2"/>
    <property type="protein sequence ID" value="ENSMUSP00000152538.2"/>
    <property type="gene ID" value="ENSMUSG00000079092.5"/>
</dbReference>
<dbReference type="GeneID" id="18811"/>
<dbReference type="KEGG" id="mmu:18811"/>
<dbReference type="UCSC" id="uc007plx.1">
    <molecule id="P04095-1"/>
    <property type="organism name" value="mouse"/>
</dbReference>
<dbReference type="UCSC" id="uc011ywi.1">
    <molecule id="P04095-2"/>
    <property type="organism name" value="mouse"/>
</dbReference>
<dbReference type="AGR" id="MGI:97618"/>
<dbReference type="CTD" id="18811"/>
<dbReference type="MGI" id="MGI:97618">
    <property type="gene designation" value="Prl2c2"/>
</dbReference>
<dbReference type="VEuPathDB" id="HostDB:ENSMUSG00000079092"/>
<dbReference type="eggNOG" id="ENOG502QYU3">
    <property type="taxonomic scope" value="Eukaryota"/>
</dbReference>
<dbReference type="GeneTree" id="ENSGT00950000182818"/>
<dbReference type="HOGENOM" id="CLU_088274_0_0_1"/>
<dbReference type="InParanoid" id="P04095"/>
<dbReference type="OMA" id="KCQAANK"/>
<dbReference type="OrthoDB" id="41623at9989"/>
<dbReference type="PhylomeDB" id="P04095"/>
<dbReference type="TreeFam" id="TF332592"/>
<dbReference type="BRENDA" id="7.6.2.3">
    <property type="organism ID" value="3474"/>
</dbReference>
<dbReference type="BioGRID-ORCS" id="18811">
    <property type="hits" value="5 hits in 42 CRISPR screens"/>
</dbReference>
<dbReference type="ChiTaRS" id="Prl2c2">
    <property type="organism name" value="mouse"/>
</dbReference>
<dbReference type="PRO" id="PR:P04095"/>
<dbReference type="Proteomes" id="UP000000589">
    <property type="component" value="Chromosome 13"/>
</dbReference>
<dbReference type="RNAct" id="P04095">
    <property type="molecule type" value="protein"/>
</dbReference>
<dbReference type="Bgee" id="ENSMUSG00000079092">
    <property type="expression patterns" value="Expressed in placenta and 24 other cell types or tissues"/>
</dbReference>
<dbReference type="ExpressionAtlas" id="P04095">
    <property type="expression patterns" value="baseline and differential"/>
</dbReference>
<dbReference type="GO" id="GO:0005783">
    <property type="term" value="C:endoplasmic reticulum"/>
    <property type="evidence" value="ECO:0000314"/>
    <property type="project" value="MGI"/>
</dbReference>
<dbReference type="GO" id="GO:0005615">
    <property type="term" value="C:extracellular space"/>
    <property type="evidence" value="ECO:0000314"/>
    <property type="project" value="MGI"/>
</dbReference>
<dbReference type="GO" id="GO:0008083">
    <property type="term" value="F:growth factor activity"/>
    <property type="evidence" value="ECO:0000314"/>
    <property type="project" value="MGI"/>
</dbReference>
<dbReference type="GO" id="GO:0005179">
    <property type="term" value="F:hormone activity"/>
    <property type="evidence" value="ECO:0000314"/>
    <property type="project" value="MGI"/>
</dbReference>
<dbReference type="GO" id="GO:0043534">
    <property type="term" value="P:blood vessel endothelial cell migration"/>
    <property type="evidence" value="ECO:0000314"/>
    <property type="project" value="MGI"/>
</dbReference>
<dbReference type="GO" id="GO:0030030">
    <property type="term" value="P:cell projection organization"/>
    <property type="evidence" value="ECO:0000314"/>
    <property type="project" value="MGI"/>
</dbReference>
<dbReference type="GO" id="GO:0045445">
    <property type="term" value="P:myoblast differentiation"/>
    <property type="evidence" value="ECO:0000314"/>
    <property type="project" value="MGI"/>
</dbReference>
<dbReference type="GO" id="GO:0045662">
    <property type="term" value="P:negative regulation of myoblast differentiation"/>
    <property type="evidence" value="ECO:0000314"/>
    <property type="project" value="MGI"/>
</dbReference>
<dbReference type="GO" id="GO:0007405">
    <property type="term" value="P:neuroblast proliferation"/>
    <property type="evidence" value="ECO:0000314"/>
    <property type="project" value="MGI"/>
</dbReference>
<dbReference type="GO" id="GO:0045766">
    <property type="term" value="P:positive regulation of angiogenesis"/>
    <property type="evidence" value="ECO:0000314"/>
    <property type="project" value="MGI"/>
</dbReference>
<dbReference type="GO" id="GO:0043536">
    <property type="term" value="P:positive regulation of blood vessel endothelial cell migration"/>
    <property type="evidence" value="ECO:0000314"/>
    <property type="project" value="MGI"/>
</dbReference>
<dbReference type="GO" id="GO:0031346">
    <property type="term" value="P:positive regulation of cell projection organization"/>
    <property type="evidence" value="ECO:0000314"/>
    <property type="project" value="MGI"/>
</dbReference>
<dbReference type="GO" id="GO:0002052">
    <property type="term" value="P:positive regulation of neuroblast proliferation"/>
    <property type="evidence" value="ECO:0000314"/>
    <property type="project" value="MGI"/>
</dbReference>
<dbReference type="GO" id="GO:0045944">
    <property type="term" value="P:positive regulation of transcription by RNA polymerase II"/>
    <property type="evidence" value="ECO:0000314"/>
    <property type="project" value="MGI"/>
</dbReference>
<dbReference type="GO" id="GO:0032534">
    <property type="term" value="P:regulation of microvillus assembly"/>
    <property type="evidence" value="ECO:0000314"/>
    <property type="project" value="MGI"/>
</dbReference>
<dbReference type="GO" id="GO:0002040">
    <property type="term" value="P:sprouting angiogenesis"/>
    <property type="evidence" value="ECO:0000314"/>
    <property type="project" value="MGI"/>
</dbReference>
<dbReference type="GO" id="GO:0006366">
    <property type="term" value="P:transcription by RNA polymerase II"/>
    <property type="evidence" value="ECO:0000314"/>
    <property type="project" value="MGI"/>
</dbReference>
<dbReference type="CDD" id="cd10288">
    <property type="entry name" value="prolactin_like"/>
    <property type="match status" value="1"/>
</dbReference>
<dbReference type="FunFam" id="1.20.1250.10:FF:000047">
    <property type="entry name" value="Growth hormone d21"/>
    <property type="match status" value="1"/>
</dbReference>
<dbReference type="Gene3D" id="1.20.1250.10">
    <property type="match status" value="1"/>
</dbReference>
<dbReference type="InterPro" id="IPR009079">
    <property type="entry name" value="4_helix_cytokine-like_core"/>
</dbReference>
<dbReference type="InterPro" id="IPR001400">
    <property type="entry name" value="Somatotropin/Prolactin"/>
</dbReference>
<dbReference type="InterPro" id="IPR018116">
    <property type="entry name" value="Somatotropin_CS"/>
</dbReference>
<dbReference type="PANTHER" id="PTHR11417:SF39">
    <property type="entry name" value="GROWTH HORMONE D22-RELATED"/>
    <property type="match status" value="1"/>
</dbReference>
<dbReference type="PANTHER" id="PTHR11417">
    <property type="entry name" value="SOMATOTROPIN,PROLACTIN"/>
    <property type="match status" value="1"/>
</dbReference>
<dbReference type="Pfam" id="PF00103">
    <property type="entry name" value="Hormone_1"/>
    <property type="match status" value="1"/>
</dbReference>
<dbReference type="PRINTS" id="PR00836">
    <property type="entry name" value="SOMATOTROPIN"/>
</dbReference>
<dbReference type="SUPFAM" id="SSF47266">
    <property type="entry name" value="4-helical cytokines"/>
    <property type="match status" value="1"/>
</dbReference>
<dbReference type="PROSITE" id="PS00266">
    <property type="entry name" value="SOMATOTROPIN_1"/>
    <property type="match status" value="1"/>
</dbReference>
<dbReference type="PROSITE" id="PS00338">
    <property type="entry name" value="SOMATOTROPIN_2"/>
    <property type="match status" value="1"/>
</dbReference>